<sequence length="333" mass="36078">MTNAATDKSVASVARDVSTGKPGKSPDAAVHLLSGGLAGLTSAVTLQPFDLLKTRLQQQHSETSKLTIAGEIRKLSQLKELWRGAVPSALRTSVGAGLYFTTLSKMRAAVAQYNHRDSSVTSVLPKLLPMENLATGFVARAIVGYITMPITMVKTRFESNIYSYRTMGESIVGIYKDIGPDGVVHRSSLLNFFKGSVATLARDCPYAGLYVLFYEGFKNDVLVKVIPESVTGSDSRSSVINSSSAILAASVSTTITAPFDAIKTRLQLTKETSILKTTGILLREDGGVFNLFRGLSLRFGRKALSAGISWCIYEELIKSDFSQCRLFNKERLA</sequence>
<reference key="1">
    <citation type="journal article" date="2007" name="Nat. Biotechnol.">
        <title>Genome sequence of the lignocellulose-bioconverting and xylose-fermenting yeast Pichia stipitis.</title>
        <authorList>
            <person name="Jeffries T.W."/>
            <person name="Grigoriev I.V."/>
            <person name="Grimwood J."/>
            <person name="Laplaza J.M."/>
            <person name="Aerts A."/>
            <person name="Salamov A."/>
            <person name="Schmutz J."/>
            <person name="Lindquist E."/>
            <person name="Dehal P."/>
            <person name="Shapiro H."/>
            <person name="Jin Y.-S."/>
            <person name="Passoth V."/>
            <person name="Richardson P.M."/>
        </authorList>
    </citation>
    <scope>NUCLEOTIDE SEQUENCE [LARGE SCALE GENOMIC DNA]</scope>
    <source>
        <strain>ATCC 58785 / CBS 6054 / NBRC 10063 / NRRL Y-11545</strain>
    </source>
</reference>
<comment type="function">
    <text evidence="2">Mitochondrial glycine transporter that imports glycine into the mitochondrial matrix. Plays an important role in providing glycine for the first enzymatic step in heme biosynthesis, the condensation of glycine with succinyl-CoA to produce 5-aminolevulinate (ALA) in the mitochondrial matrix.</text>
</comment>
<comment type="catalytic activity">
    <reaction evidence="1">
        <text>glycine(in) = glycine(out)</text>
        <dbReference type="Rhea" id="RHEA:70715"/>
        <dbReference type="ChEBI" id="CHEBI:57305"/>
    </reaction>
</comment>
<comment type="subcellular location">
    <subcellularLocation>
        <location evidence="2">Mitochondrion inner membrane</location>
        <topology evidence="2">Multi-pass membrane protein</topology>
    </subcellularLocation>
</comment>
<comment type="similarity">
    <text evidence="2">Belongs to the mitochondrial carrier (TC 2.A.29) family. SLC25A38 subfamily.</text>
</comment>
<feature type="chain" id="PRO_0000378942" description="Mitochondrial glycine transporter">
    <location>
        <begin position="1"/>
        <end position="333"/>
    </location>
</feature>
<feature type="transmembrane region" description="Helical; Name=1" evidence="2">
    <location>
        <begin position="32"/>
        <end position="57"/>
    </location>
</feature>
<feature type="transmembrane region" description="Helical; Name=2" evidence="2">
    <location>
        <begin position="84"/>
        <end position="110"/>
    </location>
</feature>
<feature type="transmembrane region" description="Helical; Name=3" evidence="2">
    <location>
        <begin position="133"/>
        <end position="158"/>
    </location>
</feature>
<feature type="transmembrane region" description="Helical; Name=4" evidence="2">
    <location>
        <begin position="195"/>
        <end position="218"/>
    </location>
</feature>
<feature type="transmembrane region" description="Helical; Name=5" evidence="2">
    <location>
        <begin position="240"/>
        <end position="266"/>
    </location>
</feature>
<feature type="transmembrane region" description="Helical; Name=6" evidence="2">
    <location>
        <begin position="294"/>
        <end position="312"/>
    </location>
</feature>
<feature type="repeat" description="Solcar 1" evidence="2">
    <location>
        <begin position="26"/>
        <end position="109"/>
    </location>
</feature>
<feature type="repeat" description="Solcar 2" evidence="2">
    <location>
        <begin position="127"/>
        <end position="220"/>
    </location>
</feature>
<feature type="repeat" description="Solcar 3" evidence="2">
    <location>
        <begin position="236"/>
        <end position="319"/>
    </location>
</feature>
<feature type="region of interest" description="Disordered" evidence="3">
    <location>
        <begin position="1"/>
        <end position="25"/>
    </location>
</feature>
<organism>
    <name type="scientific">Scheffersomyces stipitis (strain ATCC 58785 / CBS 6054 / NBRC 10063 / NRRL Y-11545)</name>
    <name type="common">Yeast</name>
    <name type="synonym">Pichia stipitis</name>
    <dbReference type="NCBI Taxonomy" id="322104"/>
    <lineage>
        <taxon>Eukaryota</taxon>
        <taxon>Fungi</taxon>
        <taxon>Dikarya</taxon>
        <taxon>Ascomycota</taxon>
        <taxon>Saccharomycotina</taxon>
        <taxon>Pichiomycetes</taxon>
        <taxon>Debaryomycetaceae</taxon>
        <taxon>Scheffersomyces</taxon>
    </lineage>
</organism>
<dbReference type="EMBL" id="CP000502">
    <property type="protein sequence ID" value="ABN68440.2"/>
    <property type="molecule type" value="Genomic_DNA"/>
</dbReference>
<dbReference type="RefSeq" id="XP_001386469.2">
    <property type="nucleotide sequence ID" value="XM_001386432.1"/>
</dbReference>
<dbReference type="SMR" id="A3M019"/>
<dbReference type="FunCoup" id="A3M019">
    <property type="interactions" value="111"/>
</dbReference>
<dbReference type="STRING" id="322104.A3M019"/>
<dbReference type="GeneID" id="4840872"/>
<dbReference type="KEGG" id="pic:PICST_91291"/>
<dbReference type="eggNOG" id="KOG0766">
    <property type="taxonomic scope" value="Eukaryota"/>
</dbReference>
<dbReference type="HOGENOM" id="CLU_015166_0_3_1"/>
<dbReference type="InParanoid" id="A3M019"/>
<dbReference type="OMA" id="WGIYEEL"/>
<dbReference type="OrthoDB" id="1924968at2759"/>
<dbReference type="Proteomes" id="UP000002258">
    <property type="component" value="Chromosome 8"/>
</dbReference>
<dbReference type="GO" id="GO:0005743">
    <property type="term" value="C:mitochondrial inner membrane"/>
    <property type="evidence" value="ECO:0007669"/>
    <property type="project" value="UniProtKB-SubCell"/>
</dbReference>
<dbReference type="GO" id="GO:0015187">
    <property type="term" value="F:glycine transmembrane transporter activity"/>
    <property type="evidence" value="ECO:0007669"/>
    <property type="project" value="UniProtKB-UniRule"/>
</dbReference>
<dbReference type="GO" id="GO:1904983">
    <property type="term" value="P:glycine import into mitochondrion"/>
    <property type="evidence" value="ECO:0007669"/>
    <property type="project" value="UniProtKB-UniRule"/>
</dbReference>
<dbReference type="Gene3D" id="1.50.40.10">
    <property type="entry name" value="Mitochondrial carrier domain"/>
    <property type="match status" value="1"/>
</dbReference>
<dbReference type="HAMAP" id="MF_03064">
    <property type="entry name" value="SLC25A38"/>
    <property type="match status" value="1"/>
</dbReference>
<dbReference type="InterPro" id="IPR030847">
    <property type="entry name" value="Hem25/SLC25A38"/>
</dbReference>
<dbReference type="InterPro" id="IPR002067">
    <property type="entry name" value="Mit_carrier"/>
</dbReference>
<dbReference type="InterPro" id="IPR018108">
    <property type="entry name" value="Mitochondrial_sb/sol_carrier"/>
</dbReference>
<dbReference type="InterPro" id="IPR023395">
    <property type="entry name" value="Mt_carrier_dom_sf"/>
</dbReference>
<dbReference type="PANTHER" id="PTHR46181">
    <property type="entry name" value="MITOCHONDRIAL GLYCINE TRANSPORTER"/>
    <property type="match status" value="1"/>
</dbReference>
<dbReference type="PANTHER" id="PTHR46181:SF3">
    <property type="entry name" value="MITOCHONDRIAL GLYCINE TRANSPORTER"/>
    <property type="match status" value="1"/>
</dbReference>
<dbReference type="Pfam" id="PF00153">
    <property type="entry name" value="Mito_carr"/>
    <property type="match status" value="3"/>
</dbReference>
<dbReference type="PRINTS" id="PR00926">
    <property type="entry name" value="MITOCARRIER"/>
</dbReference>
<dbReference type="SUPFAM" id="SSF103506">
    <property type="entry name" value="Mitochondrial carrier"/>
    <property type="match status" value="1"/>
</dbReference>
<dbReference type="PROSITE" id="PS50920">
    <property type="entry name" value="SOLCAR"/>
    <property type="match status" value="3"/>
</dbReference>
<gene>
    <name type="ORF">PICST_91291</name>
</gene>
<evidence type="ECO:0000250" key="1">
    <source>
        <dbReference type="UniProtKB" id="Q96DW6"/>
    </source>
</evidence>
<evidence type="ECO:0000255" key="2">
    <source>
        <dbReference type="HAMAP-Rule" id="MF_03064"/>
    </source>
</evidence>
<evidence type="ECO:0000256" key="3">
    <source>
        <dbReference type="SAM" id="MobiDB-lite"/>
    </source>
</evidence>
<protein>
    <recommendedName>
        <fullName evidence="2">Mitochondrial glycine transporter</fullName>
    </recommendedName>
    <alternativeName>
        <fullName evidence="2">Solute carrier family 25 member 38 homolog</fullName>
    </alternativeName>
</protein>
<keyword id="KW-0472">Membrane</keyword>
<keyword id="KW-0496">Mitochondrion</keyword>
<keyword id="KW-0999">Mitochondrion inner membrane</keyword>
<keyword id="KW-1185">Reference proteome</keyword>
<keyword id="KW-0677">Repeat</keyword>
<keyword id="KW-0812">Transmembrane</keyword>
<keyword id="KW-1133">Transmembrane helix</keyword>
<keyword id="KW-0813">Transport</keyword>
<name>S2538_PICST</name>
<accession>A3M019</accession>
<proteinExistence type="inferred from homology"/>